<evidence type="ECO:0000255" key="1">
    <source>
        <dbReference type="HAMAP-Rule" id="MF_01328"/>
    </source>
</evidence>
<evidence type="ECO:0000256" key="2">
    <source>
        <dbReference type="SAM" id="MobiDB-lite"/>
    </source>
</evidence>
<evidence type="ECO:0000305" key="3"/>
<name>RL4_YERPY</name>
<accession>B1JIW2</accession>
<keyword id="KW-0687">Ribonucleoprotein</keyword>
<keyword id="KW-0689">Ribosomal protein</keyword>
<keyword id="KW-0694">RNA-binding</keyword>
<keyword id="KW-0699">rRNA-binding</keyword>
<proteinExistence type="inferred from homology"/>
<comment type="function">
    <text evidence="1">One of the primary rRNA binding proteins, this protein initially binds near the 5'-end of the 23S rRNA. It is important during the early stages of 50S assembly. It makes multiple contacts with different domains of the 23S rRNA in the assembled 50S subunit and ribosome.</text>
</comment>
<comment type="function">
    <text evidence="1">Forms part of the polypeptide exit tunnel.</text>
</comment>
<comment type="subunit">
    <text evidence="1">Part of the 50S ribosomal subunit.</text>
</comment>
<comment type="similarity">
    <text evidence="1">Belongs to the universal ribosomal protein uL4 family.</text>
</comment>
<protein>
    <recommendedName>
        <fullName evidence="1">Large ribosomal subunit protein uL4</fullName>
    </recommendedName>
    <alternativeName>
        <fullName evidence="3">50S ribosomal protein L4</fullName>
    </alternativeName>
</protein>
<sequence>MELVMKDAPGALTVSETTFGRDFNEALVHQVVVAYAAGARQGTRAQKTRAEVTGSGKKPWRQKGTGRARAGSVKSPIWRSGGVTFAAKPQDHSQKVNKKMYRGALKSILSELVRQDRLIIVEKFSVEAPKTKLLAQKLKDMALEDVLIVTGELDENLFLAARNLYKVDVRDVAGIDPVSLIAFDKVVMTADAVKQVEEMLA</sequence>
<feature type="chain" id="PRO_1000142213" description="Large ribosomal subunit protein uL4">
    <location>
        <begin position="1"/>
        <end position="201"/>
    </location>
</feature>
<feature type="region of interest" description="Disordered" evidence="2">
    <location>
        <begin position="45"/>
        <end position="73"/>
    </location>
</feature>
<organism>
    <name type="scientific">Yersinia pseudotuberculosis serotype O:3 (strain YPIII)</name>
    <dbReference type="NCBI Taxonomy" id="502800"/>
    <lineage>
        <taxon>Bacteria</taxon>
        <taxon>Pseudomonadati</taxon>
        <taxon>Pseudomonadota</taxon>
        <taxon>Gammaproteobacteria</taxon>
        <taxon>Enterobacterales</taxon>
        <taxon>Yersiniaceae</taxon>
        <taxon>Yersinia</taxon>
    </lineage>
</organism>
<gene>
    <name evidence="1" type="primary">rplD</name>
    <name type="ordered locus">YPK_0284</name>
</gene>
<dbReference type="EMBL" id="CP000950">
    <property type="protein sequence ID" value="ACA66597.1"/>
    <property type="molecule type" value="Genomic_DNA"/>
</dbReference>
<dbReference type="RefSeq" id="WP_002218934.1">
    <property type="nucleotide sequence ID" value="NZ_CP009792.1"/>
</dbReference>
<dbReference type="SMR" id="B1JIW2"/>
<dbReference type="GeneID" id="96663195"/>
<dbReference type="KEGG" id="ypy:YPK_0284"/>
<dbReference type="PATRIC" id="fig|502800.11.peg.891"/>
<dbReference type="GO" id="GO:1990904">
    <property type="term" value="C:ribonucleoprotein complex"/>
    <property type="evidence" value="ECO:0007669"/>
    <property type="project" value="UniProtKB-KW"/>
</dbReference>
<dbReference type="GO" id="GO:0005840">
    <property type="term" value="C:ribosome"/>
    <property type="evidence" value="ECO:0007669"/>
    <property type="project" value="UniProtKB-KW"/>
</dbReference>
<dbReference type="GO" id="GO:0019843">
    <property type="term" value="F:rRNA binding"/>
    <property type="evidence" value="ECO:0007669"/>
    <property type="project" value="UniProtKB-UniRule"/>
</dbReference>
<dbReference type="GO" id="GO:0003735">
    <property type="term" value="F:structural constituent of ribosome"/>
    <property type="evidence" value="ECO:0007669"/>
    <property type="project" value="InterPro"/>
</dbReference>
<dbReference type="GO" id="GO:0006412">
    <property type="term" value="P:translation"/>
    <property type="evidence" value="ECO:0007669"/>
    <property type="project" value="UniProtKB-UniRule"/>
</dbReference>
<dbReference type="FunFam" id="3.40.1370.10:FF:000001">
    <property type="entry name" value="50S ribosomal protein L4"/>
    <property type="match status" value="1"/>
</dbReference>
<dbReference type="Gene3D" id="3.40.1370.10">
    <property type="match status" value="1"/>
</dbReference>
<dbReference type="HAMAP" id="MF_01328_B">
    <property type="entry name" value="Ribosomal_uL4_B"/>
    <property type="match status" value="1"/>
</dbReference>
<dbReference type="InterPro" id="IPR002136">
    <property type="entry name" value="Ribosomal_uL4"/>
</dbReference>
<dbReference type="InterPro" id="IPR013005">
    <property type="entry name" value="Ribosomal_uL4-like"/>
</dbReference>
<dbReference type="InterPro" id="IPR023574">
    <property type="entry name" value="Ribosomal_uL4_dom_sf"/>
</dbReference>
<dbReference type="NCBIfam" id="TIGR03953">
    <property type="entry name" value="rplD_bact"/>
    <property type="match status" value="1"/>
</dbReference>
<dbReference type="PANTHER" id="PTHR10746">
    <property type="entry name" value="50S RIBOSOMAL PROTEIN L4"/>
    <property type="match status" value="1"/>
</dbReference>
<dbReference type="PANTHER" id="PTHR10746:SF6">
    <property type="entry name" value="LARGE RIBOSOMAL SUBUNIT PROTEIN UL4M"/>
    <property type="match status" value="1"/>
</dbReference>
<dbReference type="Pfam" id="PF00573">
    <property type="entry name" value="Ribosomal_L4"/>
    <property type="match status" value="1"/>
</dbReference>
<dbReference type="SUPFAM" id="SSF52166">
    <property type="entry name" value="Ribosomal protein L4"/>
    <property type="match status" value="1"/>
</dbReference>
<reference key="1">
    <citation type="submission" date="2008-02" db="EMBL/GenBank/DDBJ databases">
        <title>Complete sequence of Yersinia pseudotuberculosis YPIII.</title>
        <authorList>
            <consortium name="US DOE Joint Genome Institute"/>
            <person name="Copeland A."/>
            <person name="Lucas S."/>
            <person name="Lapidus A."/>
            <person name="Glavina del Rio T."/>
            <person name="Dalin E."/>
            <person name="Tice H."/>
            <person name="Bruce D."/>
            <person name="Goodwin L."/>
            <person name="Pitluck S."/>
            <person name="Munk A.C."/>
            <person name="Brettin T."/>
            <person name="Detter J.C."/>
            <person name="Han C."/>
            <person name="Tapia R."/>
            <person name="Schmutz J."/>
            <person name="Larimer F."/>
            <person name="Land M."/>
            <person name="Hauser L."/>
            <person name="Challacombe J.F."/>
            <person name="Green L."/>
            <person name="Lindler L.E."/>
            <person name="Nikolich M.P."/>
            <person name="Richardson P."/>
        </authorList>
    </citation>
    <scope>NUCLEOTIDE SEQUENCE [LARGE SCALE GENOMIC DNA]</scope>
    <source>
        <strain>YPIII</strain>
    </source>
</reference>